<dbReference type="EC" id="2.5.1.61" evidence="1"/>
<dbReference type="EMBL" id="CP000087">
    <property type="protein sequence ID" value="ABE04427.1"/>
    <property type="molecule type" value="Genomic_DNA"/>
</dbReference>
<dbReference type="RefSeq" id="WP_011477036.1">
    <property type="nucleotide sequence ID" value="NC_007940.1"/>
</dbReference>
<dbReference type="SMR" id="Q1RJN7"/>
<dbReference type="KEGG" id="rbe:RBE_0346"/>
<dbReference type="eggNOG" id="COG0181">
    <property type="taxonomic scope" value="Bacteria"/>
</dbReference>
<dbReference type="HOGENOM" id="CLU_019704_0_2_5"/>
<dbReference type="OrthoDB" id="9810298at2"/>
<dbReference type="UniPathway" id="UPA00251">
    <property type="reaction ID" value="UER00319"/>
</dbReference>
<dbReference type="Proteomes" id="UP000001951">
    <property type="component" value="Chromosome"/>
</dbReference>
<dbReference type="GO" id="GO:0005737">
    <property type="term" value="C:cytoplasm"/>
    <property type="evidence" value="ECO:0007669"/>
    <property type="project" value="TreeGrafter"/>
</dbReference>
<dbReference type="GO" id="GO:0004418">
    <property type="term" value="F:hydroxymethylbilane synthase activity"/>
    <property type="evidence" value="ECO:0007669"/>
    <property type="project" value="UniProtKB-UniRule"/>
</dbReference>
<dbReference type="GO" id="GO:0006782">
    <property type="term" value="P:protoporphyrinogen IX biosynthetic process"/>
    <property type="evidence" value="ECO:0007669"/>
    <property type="project" value="UniProtKB-UniRule"/>
</dbReference>
<dbReference type="CDD" id="cd13647">
    <property type="entry name" value="PBP2_PBGD_2"/>
    <property type="match status" value="1"/>
</dbReference>
<dbReference type="FunFam" id="3.40.190.10:FF:000004">
    <property type="entry name" value="Porphobilinogen deaminase"/>
    <property type="match status" value="1"/>
</dbReference>
<dbReference type="FunFam" id="3.40.190.10:FF:000005">
    <property type="entry name" value="Porphobilinogen deaminase"/>
    <property type="match status" value="1"/>
</dbReference>
<dbReference type="Gene3D" id="3.40.190.10">
    <property type="entry name" value="Periplasmic binding protein-like II"/>
    <property type="match status" value="2"/>
</dbReference>
<dbReference type="Gene3D" id="3.30.160.40">
    <property type="entry name" value="Porphobilinogen deaminase, C-terminal domain"/>
    <property type="match status" value="1"/>
</dbReference>
<dbReference type="HAMAP" id="MF_00260">
    <property type="entry name" value="Porphobil_deam"/>
    <property type="match status" value="1"/>
</dbReference>
<dbReference type="InterPro" id="IPR000860">
    <property type="entry name" value="HemC"/>
</dbReference>
<dbReference type="InterPro" id="IPR022419">
    <property type="entry name" value="Porphobilin_deaminase_cofac_BS"/>
</dbReference>
<dbReference type="InterPro" id="IPR022417">
    <property type="entry name" value="Porphobilin_deaminase_N"/>
</dbReference>
<dbReference type="InterPro" id="IPR022418">
    <property type="entry name" value="Porphobilinogen_deaminase_C"/>
</dbReference>
<dbReference type="InterPro" id="IPR036803">
    <property type="entry name" value="Porphobilinogen_deaminase_C_sf"/>
</dbReference>
<dbReference type="NCBIfam" id="TIGR00212">
    <property type="entry name" value="hemC"/>
    <property type="match status" value="1"/>
</dbReference>
<dbReference type="PANTHER" id="PTHR11557">
    <property type="entry name" value="PORPHOBILINOGEN DEAMINASE"/>
    <property type="match status" value="1"/>
</dbReference>
<dbReference type="PANTHER" id="PTHR11557:SF0">
    <property type="entry name" value="PORPHOBILINOGEN DEAMINASE"/>
    <property type="match status" value="1"/>
</dbReference>
<dbReference type="Pfam" id="PF01379">
    <property type="entry name" value="Porphobil_deam"/>
    <property type="match status" value="1"/>
</dbReference>
<dbReference type="Pfam" id="PF03900">
    <property type="entry name" value="Porphobil_deamC"/>
    <property type="match status" value="1"/>
</dbReference>
<dbReference type="PIRSF" id="PIRSF001438">
    <property type="entry name" value="4pyrrol_synth_OHMeBilane_synth"/>
    <property type="match status" value="1"/>
</dbReference>
<dbReference type="PRINTS" id="PR00151">
    <property type="entry name" value="PORPHBDMNASE"/>
</dbReference>
<dbReference type="SUPFAM" id="SSF53850">
    <property type="entry name" value="Periplasmic binding protein-like II"/>
    <property type="match status" value="1"/>
</dbReference>
<dbReference type="SUPFAM" id="SSF54782">
    <property type="entry name" value="Porphobilinogen deaminase (hydroxymethylbilane synthase), C-terminal domain"/>
    <property type="match status" value="1"/>
</dbReference>
<dbReference type="PROSITE" id="PS00533">
    <property type="entry name" value="PORPHOBILINOGEN_DEAM"/>
    <property type="match status" value="1"/>
</dbReference>
<gene>
    <name evidence="1" type="primary">hemC</name>
    <name type="ordered locus">RBE_0346</name>
</gene>
<keyword id="KW-0627">Porphyrin biosynthesis</keyword>
<keyword id="KW-0808">Transferase</keyword>
<feature type="chain" id="PRO_0000272643" description="Porphobilinogen deaminase">
    <location>
        <begin position="1"/>
        <end position="300"/>
    </location>
</feature>
<feature type="modified residue" description="S-(dipyrrolylmethanemethyl)cysteine" evidence="1">
    <location>
        <position position="242"/>
    </location>
</feature>
<accession>Q1RJN7</accession>
<evidence type="ECO:0000255" key="1">
    <source>
        <dbReference type="HAMAP-Rule" id="MF_00260"/>
    </source>
</evidence>
<sequence>MINSIRIGTRKSKLALTQTNLVIEQIKQHFPNINCEIVEITTSGDLIQNKPLYDIGGKALFLKEIEQALLNKKVDLAVHSLKDVPGIIPKDLSIEAVLEREDSRDVFVCLTHKSIEELPKNAVIGTSSVRRKLCVQRMRPDLEIIVFRGNVDSRINKLINKEVDATILAYAGLKRLNAFNPEYCHLIEHSQMLPCIGQGVIAIEIRKDDHDMIEICKQINHLPTFELIKPERALLEYLDANCRTPIGAYSKYLDNGDIQTDFMLGNLDGSKIAFHTEISNPKTSKESGIKAAKVMLLSLS</sequence>
<proteinExistence type="inferred from homology"/>
<name>HEM3_RICBR</name>
<reference key="1">
    <citation type="journal article" date="2006" name="PLoS Genet.">
        <title>Genome sequence of Rickettsia bellii illuminates the role of amoebae in gene exchanges between intracellular pathogens.</title>
        <authorList>
            <person name="Ogata H."/>
            <person name="La Scola B."/>
            <person name="Audic S."/>
            <person name="Renesto P."/>
            <person name="Blanc G."/>
            <person name="Robert C."/>
            <person name="Fournier P.-E."/>
            <person name="Claverie J.-M."/>
            <person name="Raoult D."/>
        </authorList>
    </citation>
    <scope>NUCLEOTIDE SEQUENCE [LARGE SCALE GENOMIC DNA]</scope>
    <source>
        <strain>RML369-C</strain>
    </source>
</reference>
<protein>
    <recommendedName>
        <fullName evidence="1">Porphobilinogen deaminase</fullName>
        <shortName evidence="1">PBG</shortName>
        <ecNumber evidence="1">2.5.1.61</ecNumber>
    </recommendedName>
    <alternativeName>
        <fullName evidence="1">Hydroxymethylbilane synthase</fullName>
        <shortName evidence="1">HMBS</shortName>
    </alternativeName>
    <alternativeName>
        <fullName evidence="1">Pre-uroporphyrinogen synthase</fullName>
    </alternativeName>
</protein>
<comment type="function">
    <text evidence="1">Tetrapolymerization of the monopyrrole PBG into the hydroxymethylbilane pre-uroporphyrinogen in several discrete steps.</text>
</comment>
<comment type="catalytic activity">
    <reaction evidence="1">
        <text>4 porphobilinogen + H2O = hydroxymethylbilane + 4 NH4(+)</text>
        <dbReference type="Rhea" id="RHEA:13185"/>
        <dbReference type="ChEBI" id="CHEBI:15377"/>
        <dbReference type="ChEBI" id="CHEBI:28938"/>
        <dbReference type="ChEBI" id="CHEBI:57845"/>
        <dbReference type="ChEBI" id="CHEBI:58126"/>
        <dbReference type="EC" id="2.5.1.61"/>
    </reaction>
</comment>
<comment type="cofactor">
    <cofactor evidence="1">
        <name>dipyrromethane</name>
        <dbReference type="ChEBI" id="CHEBI:60342"/>
    </cofactor>
    <text evidence="1">Binds 1 dipyrromethane group covalently.</text>
</comment>
<comment type="pathway">
    <text evidence="1">Porphyrin-containing compound metabolism; protoporphyrin-IX biosynthesis; coproporphyrinogen-III from 5-aminolevulinate: step 2/4.</text>
</comment>
<comment type="subunit">
    <text evidence="1">Monomer.</text>
</comment>
<comment type="miscellaneous">
    <text evidence="1">The porphobilinogen subunits are added to the dipyrromethane group.</text>
</comment>
<comment type="similarity">
    <text evidence="1">Belongs to the HMBS family.</text>
</comment>
<organism>
    <name type="scientific">Rickettsia bellii (strain RML369-C)</name>
    <dbReference type="NCBI Taxonomy" id="336407"/>
    <lineage>
        <taxon>Bacteria</taxon>
        <taxon>Pseudomonadati</taxon>
        <taxon>Pseudomonadota</taxon>
        <taxon>Alphaproteobacteria</taxon>
        <taxon>Rickettsiales</taxon>
        <taxon>Rickettsiaceae</taxon>
        <taxon>Rickettsieae</taxon>
        <taxon>Rickettsia</taxon>
        <taxon>belli group</taxon>
    </lineage>
</organism>